<dbReference type="EMBL" id="CP000568">
    <property type="protein sequence ID" value="ABN52505.1"/>
    <property type="molecule type" value="Genomic_DNA"/>
</dbReference>
<dbReference type="RefSeq" id="WP_003517501.1">
    <property type="nucleotide sequence ID" value="NC_009012.1"/>
</dbReference>
<dbReference type="SMR" id="A3DEX6"/>
<dbReference type="STRING" id="203119.Cthe_1273"/>
<dbReference type="CAZy" id="CBM42">
    <property type="family name" value="Carbohydrate-Binding Module Family 42"/>
</dbReference>
<dbReference type="GeneID" id="35805974"/>
<dbReference type="KEGG" id="cth:Cthe_1273"/>
<dbReference type="eggNOG" id="COG2755">
    <property type="taxonomic scope" value="Bacteria"/>
</dbReference>
<dbReference type="HOGENOM" id="CLU_530720_0_0_9"/>
<dbReference type="OrthoDB" id="9800626at2"/>
<dbReference type="Proteomes" id="UP000002145">
    <property type="component" value="Chromosome"/>
</dbReference>
<dbReference type="GO" id="GO:0005886">
    <property type="term" value="C:plasma membrane"/>
    <property type="evidence" value="ECO:0007669"/>
    <property type="project" value="UniProtKB-SubCell"/>
</dbReference>
<dbReference type="GO" id="GO:0046556">
    <property type="term" value="F:alpha-L-arabinofuranosidase activity"/>
    <property type="evidence" value="ECO:0007669"/>
    <property type="project" value="InterPro"/>
</dbReference>
<dbReference type="GO" id="GO:0046373">
    <property type="term" value="P:L-arabinose metabolic process"/>
    <property type="evidence" value="ECO:0007669"/>
    <property type="project" value="InterPro"/>
</dbReference>
<dbReference type="CDD" id="cd23399">
    <property type="entry name" value="beta-trefoil_ABD_ABFB"/>
    <property type="match status" value="1"/>
</dbReference>
<dbReference type="Gene3D" id="2.80.10.50">
    <property type="match status" value="1"/>
</dbReference>
<dbReference type="InterPro" id="IPR007934">
    <property type="entry name" value="AbfB_ABD"/>
</dbReference>
<dbReference type="InterPro" id="IPR036195">
    <property type="entry name" value="AbfB_ABD_sf"/>
</dbReference>
<dbReference type="InterPro" id="IPR024449">
    <property type="entry name" value="Anti-sigma_RsgI_N"/>
</dbReference>
<dbReference type="InterPro" id="IPR055431">
    <property type="entry name" value="RsgI_M"/>
</dbReference>
<dbReference type="Pfam" id="PF05270">
    <property type="entry name" value="AbfB"/>
    <property type="match status" value="1"/>
</dbReference>
<dbReference type="Pfam" id="PF23750">
    <property type="entry name" value="RsgI_M"/>
    <property type="match status" value="1"/>
</dbReference>
<dbReference type="Pfam" id="PF12791">
    <property type="entry name" value="RsgI_N"/>
    <property type="match status" value="1"/>
</dbReference>
<dbReference type="SUPFAM" id="SSF110221">
    <property type="entry name" value="AbfB domain"/>
    <property type="match status" value="1"/>
</dbReference>
<dbReference type="PROSITE" id="PS51849">
    <property type="entry name" value="RSGI_N"/>
    <property type="match status" value="1"/>
</dbReference>
<comment type="function">
    <text evidence="1">Anti-sigma factor for SigI5. Negatively regulates SigI5 activity through direct interaction. Binding of the polysaccharide substrate to the extracellular C-terminal sensing domain of RsgI5 may induce a conformational change in its N-terminal cytoplasmic region, leading to the release and activation of SigI5.</text>
</comment>
<comment type="subunit">
    <text evidence="3">Interacts (via RsgI N-terminal anti-sigma domain) with SigI5.</text>
</comment>
<comment type="subcellular location">
    <subcellularLocation>
        <location evidence="6">Cell membrane</location>
        <topology evidence="2">Single-pass membrane protein</topology>
    </subcellularLocation>
</comment>
<organism>
    <name type="scientific">Acetivibrio thermocellus (strain ATCC 27405 / DSM 1237 / JCM 9322 / NBRC 103400 / NCIMB 10682 / NRRL B-4536 / VPI 7372)</name>
    <name type="common">Clostridium thermocellum</name>
    <dbReference type="NCBI Taxonomy" id="203119"/>
    <lineage>
        <taxon>Bacteria</taxon>
        <taxon>Bacillati</taxon>
        <taxon>Bacillota</taxon>
        <taxon>Clostridia</taxon>
        <taxon>Eubacteriales</taxon>
        <taxon>Oscillospiraceae</taxon>
        <taxon>Acetivibrio</taxon>
    </lineage>
</organism>
<gene>
    <name evidence="5" type="primary">rsgI5</name>
    <name evidence="7" type="ordered locus">Cthe_1273</name>
</gene>
<name>RSGI5_ACET2</name>
<evidence type="ECO:0000250" key="1">
    <source>
        <dbReference type="UniProtKB" id="A3DBH1"/>
    </source>
</evidence>
<evidence type="ECO:0000255" key="2"/>
<evidence type="ECO:0000255" key="3">
    <source>
        <dbReference type="PROSITE-ProRule" id="PRU01196"/>
    </source>
</evidence>
<evidence type="ECO:0000256" key="4">
    <source>
        <dbReference type="SAM" id="MobiDB-lite"/>
    </source>
</evidence>
<evidence type="ECO:0000303" key="5">
    <source>
    </source>
</evidence>
<evidence type="ECO:0000305" key="6"/>
<evidence type="ECO:0000312" key="7">
    <source>
        <dbReference type="EMBL" id="ABN52505.1"/>
    </source>
</evidence>
<reference key="1">
    <citation type="submission" date="2007-02" db="EMBL/GenBank/DDBJ databases">
        <title>Complete sequence of Clostridium thermocellum ATCC 27405.</title>
        <authorList>
            <consortium name="US DOE Joint Genome Institute"/>
            <person name="Copeland A."/>
            <person name="Lucas S."/>
            <person name="Lapidus A."/>
            <person name="Barry K."/>
            <person name="Detter J.C."/>
            <person name="Glavina del Rio T."/>
            <person name="Hammon N."/>
            <person name="Israni S."/>
            <person name="Dalin E."/>
            <person name="Tice H."/>
            <person name="Pitluck S."/>
            <person name="Chertkov O."/>
            <person name="Brettin T."/>
            <person name="Bruce D."/>
            <person name="Han C."/>
            <person name="Tapia R."/>
            <person name="Gilna P."/>
            <person name="Schmutz J."/>
            <person name="Larimer F."/>
            <person name="Land M."/>
            <person name="Hauser L."/>
            <person name="Kyrpides N."/>
            <person name="Mikhailova N."/>
            <person name="Wu J.H.D."/>
            <person name="Newcomb M."/>
            <person name="Richardson P."/>
        </authorList>
    </citation>
    <scope>NUCLEOTIDE SEQUENCE [LARGE SCALE GENOMIC DNA]</scope>
    <source>
        <strain>ATCC 27405 / DSM 1237 / JCM 9322 / NBRC 103400 / NCIMB 10682 / NRRL B-4536 / VPI 7372</strain>
    </source>
</reference>
<reference key="2">
    <citation type="journal article" date="2010" name="FEMS Microbiol. Lett.">
        <title>The unique set of putative membrane-associated anti-sigma factors in Clostridium thermocellum suggests a novel extracellular carbohydrate-sensing mechanism involved in gene regulation.</title>
        <authorList>
            <person name="Kahel-Raifer H."/>
            <person name="Jindou S."/>
            <person name="Bahari L."/>
            <person name="Nataf Y."/>
            <person name="Shoham Y."/>
            <person name="Bayer E.A."/>
            <person name="Borovok I."/>
            <person name="Lamed R."/>
        </authorList>
    </citation>
    <scope>NOMENCLATURE</scope>
    <source>
        <strain>ATCC 27405 / DSM 1237 / JCM 9322 / NBRC 103400 / NCIMB 10682 / NRRL B-4536 / VPI 7372</strain>
    </source>
</reference>
<keyword id="KW-1003">Cell membrane</keyword>
<keyword id="KW-0472">Membrane</keyword>
<keyword id="KW-1185">Reference proteome</keyword>
<keyword id="KW-0812">Transmembrane</keyword>
<keyword id="KW-1133">Transmembrane helix</keyword>
<sequence length="481" mass="54012">MKHKGIVLKLTKSKAIISTNDFQCYYIKRSPTIYVGKEVEFTNKDIVTKKSVLIKPALSVACFILLIACVLSLSKIINNISPKVFAYISVDINPSFEIEIDDMGNVLNLLPLNDDAKVIADKLEIDKINVSNAIDIIINEAIKSNVINENEKDFILVSSTLNIKKEENSQQYQSEKEKLDIIINSLKDSIEKSGKADVYIVQADVNEREAARSKGISTGRYVLYNKYKDLENDLSLEDAKDADVNVLIKSMLDVASEERNPEESPKMTPTPTPTHTATHTPTDAPTPKPANTPTSTPAAKPSPKTASNSASTSTPAPKPTSTPTPTLMPTPTPTPTPADKIAYGQFMKFESSNYRGYYIRVKSFSGRIDPYVNPVEDSMFKIVPGLADPSCISFESKTYPGYYLKHENFRVILKKYEDTDLFREDATFRVVPGWADENMISFQSYNYPYRYIRHRDFELYIENIKTDLDRKDATFIGIKVD</sequence>
<proteinExistence type="inferred from homology"/>
<accession>A3DEX6</accession>
<feature type="chain" id="PRO_0000436548" description="Anti-sigma-I factor RsgI5">
    <location>
        <begin position="1"/>
        <end position="481"/>
    </location>
</feature>
<feature type="topological domain" description="Cytoplasmic" evidence="6">
    <location>
        <begin position="1"/>
        <end position="50"/>
    </location>
</feature>
<feature type="transmembrane region" description="Helical" evidence="2">
    <location>
        <begin position="51"/>
        <end position="71"/>
    </location>
</feature>
<feature type="topological domain" description="Extracellular" evidence="6">
    <location>
        <begin position="72"/>
        <end position="481"/>
    </location>
</feature>
<feature type="domain" description="RsgI N-terminal anti-sigma" evidence="3">
    <location>
        <begin position="3"/>
        <end position="50"/>
    </location>
</feature>
<feature type="region of interest" description="Disordered" evidence="4">
    <location>
        <begin position="255"/>
        <end position="339"/>
    </location>
</feature>
<feature type="compositionally biased region" description="Basic and acidic residues" evidence="4">
    <location>
        <begin position="256"/>
        <end position="265"/>
    </location>
</feature>
<feature type="compositionally biased region" description="Low complexity" evidence="4">
    <location>
        <begin position="266"/>
        <end position="283"/>
    </location>
</feature>
<feature type="compositionally biased region" description="Low complexity" evidence="4">
    <location>
        <begin position="291"/>
        <end position="315"/>
    </location>
</feature>
<feature type="compositionally biased region" description="Pro residues" evidence="4">
    <location>
        <begin position="316"/>
        <end position="336"/>
    </location>
</feature>
<protein>
    <recommendedName>
        <fullName evidence="6">Anti-sigma-I factor RsgI5</fullName>
    </recommendedName>
</protein>